<feature type="peptide" id="PRO_0000378823" description="Periviscerokinin-3" evidence="2">
    <location>
        <begin position="1"/>
        <end position="11"/>
    </location>
</feature>
<feature type="modified residue" description="Valine amide" evidence="2">
    <location>
        <position position="11"/>
    </location>
</feature>
<name>PVK3_CYRPO</name>
<comment type="function">
    <text evidence="4">Mediates visceral muscle contractile activity (myotropic activity).</text>
</comment>
<comment type="subcellular location">
    <subcellularLocation>
        <location evidence="4">Secreted</location>
    </subcellularLocation>
</comment>
<comment type="similarity">
    <text evidence="1">Belongs to the periviscerokinin family.</text>
</comment>
<keyword id="KW-0027">Amidation</keyword>
<keyword id="KW-0903">Direct protein sequencing</keyword>
<keyword id="KW-0527">Neuropeptide</keyword>
<keyword id="KW-0964">Secreted</keyword>
<organism>
    <name type="scientific">Cyrtotria poduriformis</name>
    <name type="common">Cockroach</name>
    <dbReference type="NCBI Taxonomy" id="344688"/>
    <lineage>
        <taxon>Eukaryota</taxon>
        <taxon>Metazoa</taxon>
        <taxon>Ecdysozoa</taxon>
        <taxon>Arthropoda</taxon>
        <taxon>Hexapoda</taxon>
        <taxon>Insecta</taxon>
        <taxon>Pterygota</taxon>
        <taxon>Neoptera</taxon>
        <taxon>Polyneoptera</taxon>
        <taxon>Dictyoptera</taxon>
        <taxon>Blattodea</taxon>
        <taxon>Blaberoidea</taxon>
        <taxon>Blaberidae</taxon>
        <taxon>Perisphaerinae</taxon>
        <taxon>Cyrtotria</taxon>
    </lineage>
</organism>
<reference evidence="4" key="1">
    <citation type="journal article" date="2009" name="BMC Evol. Biol.">
        <title>A proteomic approach for studying insect phylogeny: CAPA peptides of ancient insect taxa (Dictyoptera, Blattoptera) as a test case.</title>
        <authorList>
            <person name="Roth S."/>
            <person name="Fromm B."/>
            <person name="Gaede G."/>
            <person name="Predel R."/>
        </authorList>
    </citation>
    <scope>PROTEIN SEQUENCE</scope>
    <scope>AMIDATION AT VAL-11</scope>
    <source>
        <tissue evidence="2">Abdominal perisympathetic organs</tissue>
    </source>
</reference>
<dbReference type="GO" id="GO:0005576">
    <property type="term" value="C:extracellular region"/>
    <property type="evidence" value="ECO:0007669"/>
    <property type="project" value="UniProtKB-SubCell"/>
</dbReference>
<dbReference type="GO" id="GO:0007218">
    <property type="term" value="P:neuropeptide signaling pathway"/>
    <property type="evidence" value="ECO:0007669"/>
    <property type="project" value="UniProtKB-KW"/>
</dbReference>
<dbReference type="InterPro" id="IPR013231">
    <property type="entry name" value="Periviscerokinin"/>
</dbReference>
<dbReference type="Pfam" id="PF08259">
    <property type="entry name" value="Periviscerokin"/>
    <property type="match status" value="1"/>
</dbReference>
<sequence>GSSGMIPFPRV</sequence>
<evidence type="ECO:0000255" key="1"/>
<evidence type="ECO:0000269" key="2">
    <source>
    </source>
</evidence>
<evidence type="ECO:0000303" key="3">
    <source>
    </source>
</evidence>
<evidence type="ECO:0000305" key="4"/>
<proteinExistence type="evidence at protein level"/>
<protein>
    <recommendedName>
        <fullName evidence="3">Periviscerokinin-3</fullName>
        <shortName evidence="3">CyrPo-PVK-3</shortName>
    </recommendedName>
</protein>
<accession>P85578</accession>